<name>HIS1_PYRNV</name>
<dbReference type="EC" id="2.4.2.17" evidence="1"/>
<dbReference type="EMBL" id="CP001014">
    <property type="protein sequence ID" value="ACB39108.1"/>
    <property type="molecule type" value="Genomic_DNA"/>
</dbReference>
<dbReference type="RefSeq" id="WP_012349529.1">
    <property type="nucleotide sequence ID" value="NC_010525.1"/>
</dbReference>
<dbReference type="SMR" id="B1YAM9"/>
<dbReference type="STRING" id="444157.Tneu_0151"/>
<dbReference type="GeneID" id="6164786"/>
<dbReference type="KEGG" id="tne:Tneu_0151"/>
<dbReference type="eggNOG" id="arCOG02208">
    <property type="taxonomic scope" value="Archaea"/>
</dbReference>
<dbReference type="HOGENOM" id="CLU_038115_1_1_2"/>
<dbReference type="OrthoDB" id="33116at2157"/>
<dbReference type="UniPathway" id="UPA00031">
    <property type="reaction ID" value="UER00006"/>
</dbReference>
<dbReference type="Proteomes" id="UP000001694">
    <property type="component" value="Chromosome"/>
</dbReference>
<dbReference type="GO" id="GO:0005737">
    <property type="term" value="C:cytoplasm"/>
    <property type="evidence" value="ECO:0007669"/>
    <property type="project" value="UniProtKB-SubCell"/>
</dbReference>
<dbReference type="GO" id="GO:0005524">
    <property type="term" value="F:ATP binding"/>
    <property type="evidence" value="ECO:0007669"/>
    <property type="project" value="UniProtKB-KW"/>
</dbReference>
<dbReference type="GO" id="GO:0003879">
    <property type="term" value="F:ATP phosphoribosyltransferase activity"/>
    <property type="evidence" value="ECO:0007669"/>
    <property type="project" value="UniProtKB-UniRule"/>
</dbReference>
<dbReference type="GO" id="GO:0000287">
    <property type="term" value="F:magnesium ion binding"/>
    <property type="evidence" value="ECO:0007669"/>
    <property type="project" value="UniProtKB-UniRule"/>
</dbReference>
<dbReference type="GO" id="GO:0000105">
    <property type="term" value="P:L-histidine biosynthetic process"/>
    <property type="evidence" value="ECO:0007669"/>
    <property type="project" value="UniProtKB-UniRule"/>
</dbReference>
<dbReference type="CDD" id="cd13594">
    <property type="entry name" value="PBP2_HisGL4"/>
    <property type="match status" value="1"/>
</dbReference>
<dbReference type="FunFam" id="3.30.70.120:FF:000002">
    <property type="entry name" value="ATP phosphoribosyltransferase"/>
    <property type="match status" value="1"/>
</dbReference>
<dbReference type="Gene3D" id="3.30.70.120">
    <property type="match status" value="1"/>
</dbReference>
<dbReference type="Gene3D" id="3.40.190.10">
    <property type="entry name" value="Periplasmic binding protein-like II"/>
    <property type="match status" value="2"/>
</dbReference>
<dbReference type="HAMAP" id="MF_00079">
    <property type="entry name" value="HisG_Long"/>
    <property type="match status" value="1"/>
</dbReference>
<dbReference type="InterPro" id="IPR020621">
    <property type="entry name" value="ATP-PRT_HisG_long"/>
</dbReference>
<dbReference type="InterPro" id="IPR013820">
    <property type="entry name" value="ATP_PRibTrfase_cat"/>
</dbReference>
<dbReference type="InterPro" id="IPR018198">
    <property type="entry name" value="ATP_PRibTrfase_CS"/>
</dbReference>
<dbReference type="InterPro" id="IPR001348">
    <property type="entry name" value="ATP_PRibTrfase_HisG"/>
</dbReference>
<dbReference type="InterPro" id="IPR013115">
    <property type="entry name" value="HisG_C"/>
</dbReference>
<dbReference type="InterPro" id="IPR011322">
    <property type="entry name" value="N-reg_PII-like_a/b"/>
</dbReference>
<dbReference type="InterPro" id="IPR015867">
    <property type="entry name" value="N-reg_PII/ATP_PRibTrfase_C"/>
</dbReference>
<dbReference type="NCBIfam" id="TIGR00070">
    <property type="entry name" value="hisG"/>
    <property type="match status" value="1"/>
</dbReference>
<dbReference type="NCBIfam" id="TIGR03455">
    <property type="entry name" value="HisG_C-term"/>
    <property type="match status" value="1"/>
</dbReference>
<dbReference type="PANTHER" id="PTHR21403:SF10">
    <property type="entry name" value="ATP PHOSPHORIBOSYLTRANSFERASE"/>
    <property type="match status" value="1"/>
</dbReference>
<dbReference type="PANTHER" id="PTHR21403">
    <property type="entry name" value="ATP PHOSPHORIBOSYLTRANSFERASE ATP-PRTASE"/>
    <property type="match status" value="1"/>
</dbReference>
<dbReference type="Pfam" id="PF01634">
    <property type="entry name" value="HisG"/>
    <property type="match status" value="1"/>
</dbReference>
<dbReference type="Pfam" id="PF08029">
    <property type="entry name" value="HisG_C"/>
    <property type="match status" value="1"/>
</dbReference>
<dbReference type="SUPFAM" id="SSF54913">
    <property type="entry name" value="GlnB-like"/>
    <property type="match status" value="1"/>
</dbReference>
<dbReference type="SUPFAM" id="SSF53850">
    <property type="entry name" value="Periplasmic binding protein-like II"/>
    <property type="match status" value="1"/>
</dbReference>
<dbReference type="PROSITE" id="PS01316">
    <property type="entry name" value="ATP_P_PHORIBOSYLTR"/>
    <property type="match status" value="1"/>
</dbReference>
<evidence type="ECO:0000255" key="1">
    <source>
        <dbReference type="HAMAP-Rule" id="MF_00079"/>
    </source>
</evidence>
<organism>
    <name type="scientific">Pyrobaculum neutrophilum (strain DSM 2338 / JCM 9278 / NBRC 100436 / V24Sta)</name>
    <name type="common">Thermoproteus neutrophilus</name>
    <dbReference type="NCBI Taxonomy" id="444157"/>
    <lineage>
        <taxon>Archaea</taxon>
        <taxon>Thermoproteota</taxon>
        <taxon>Thermoprotei</taxon>
        <taxon>Thermoproteales</taxon>
        <taxon>Thermoproteaceae</taxon>
        <taxon>Pyrobaculum</taxon>
    </lineage>
</organism>
<feature type="chain" id="PRO_1000092756" description="ATP phosphoribosyltransferase">
    <location>
        <begin position="1"/>
        <end position="282"/>
    </location>
</feature>
<keyword id="KW-0028">Amino-acid biosynthesis</keyword>
<keyword id="KW-0067">ATP-binding</keyword>
<keyword id="KW-0963">Cytoplasm</keyword>
<keyword id="KW-0328">Glycosyltransferase</keyword>
<keyword id="KW-0368">Histidine biosynthesis</keyword>
<keyword id="KW-0460">Magnesium</keyword>
<keyword id="KW-0479">Metal-binding</keyword>
<keyword id="KW-0547">Nucleotide-binding</keyword>
<keyword id="KW-0808">Transferase</keyword>
<reference key="1">
    <citation type="submission" date="2008-03" db="EMBL/GenBank/DDBJ databases">
        <title>Complete sequence of Thermoproteus neutrophilus V24Sta.</title>
        <authorList>
            <consortium name="US DOE Joint Genome Institute"/>
            <person name="Copeland A."/>
            <person name="Lucas S."/>
            <person name="Lapidus A."/>
            <person name="Glavina del Rio T."/>
            <person name="Dalin E."/>
            <person name="Tice H."/>
            <person name="Bruce D."/>
            <person name="Goodwin L."/>
            <person name="Pitluck S."/>
            <person name="Sims D."/>
            <person name="Brettin T."/>
            <person name="Detter J.C."/>
            <person name="Han C."/>
            <person name="Kuske C.R."/>
            <person name="Schmutz J."/>
            <person name="Larimer F."/>
            <person name="Land M."/>
            <person name="Hauser L."/>
            <person name="Kyrpides N."/>
            <person name="Mikhailova N."/>
            <person name="Biddle J.F."/>
            <person name="Zhang Z."/>
            <person name="Fitz-Gibbon S.T."/>
            <person name="Lowe T.M."/>
            <person name="Saltikov C."/>
            <person name="House C.H."/>
            <person name="Richardson P."/>
        </authorList>
    </citation>
    <scope>NUCLEOTIDE SEQUENCE [LARGE SCALE GENOMIC DNA]</scope>
    <source>
        <strain>DSM 2338 / JCM 9278 / NBRC 100436 / V24Sta</strain>
    </source>
</reference>
<proteinExistence type="inferred from homology"/>
<accession>B1YAM9</accession>
<comment type="function">
    <text evidence="1">Catalyzes the condensation of ATP and 5-phosphoribose 1-diphosphate to form N'-(5'-phosphoribosyl)-ATP (PR-ATP). Has a crucial role in the pathway because the rate of histidine biosynthesis seems to be controlled primarily by regulation of HisG enzymatic activity.</text>
</comment>
<comment type="catalytic activity">
    <reaction evidence="1">
        <text>1-(5-phospho-beta-D-ribosyl)-ATP + diphosphate = 5-phospho-alpha-D-ribose 1-diphosphate + ATP</text>
        <dbReference type="Rhea" id="RHEA:18473"/>
        <dbReference type="ChEBI" id="CHEBI:30616"/>
        <dbReference type="ChEBI" id="CHEBI:33019"/>
        <dbReference type="ChEBI" id="CHEBI:58017"/>
        <dbReference type="ChEBI" id="CHEBI:73183"/>
        <dbReference type="EC" id="2.4.2.17"/>
    </reaction>
</comment>
<comment type="cofactor">
    <cofactor evidence="1">
        <name>Mg(2+)</name>
        <dbReference type="ChEBI" id="CHEBI:18420"/>
    </cofactor>
</comment>
<comment type="activity regulation">
    <text evidence="1">Feedback inhibited by histidine.</text>
</comment>
<comment type="pathway">
    <text evidence="1">Amino-acid biosynthesis; L-histidine biosynthesis; L-histidine from 5-phospho-alpha-D-ribose 1-diphosphate: step 1/9.</text>
</comment>
<comment type="subcellular location">
    <subcellularLocation>
        <location evidence="1">Cytoplasm</location>
    </subcellularLocation>
</comment>
<comment type="similarity">
    <text evidence="1">Belongs to the ATP phosphoribosyltransferase family. Long subfamily.</text>
</comment>
<sequence>MLLAVPSKGRLQEPTLKLLEAVGIKPLASDERALVLPTSWPDVNLIKARPEDIPYLVESGRVWAGVTGHDYVLESGSNVVEALDLEFGRGRLVVAVPKSSGIKSVEELPPGARVATKFVNIAYNYFAELGKRVRVVKVTGSVEVLPQLGIADAILDVMATGTTLEVHGLTPIATVLETSARLVVHPEYTSHELTKKLVTFIKGYFAAQGKKMIFLNVPAARLEAVLSVLPAMEAPSVTKLAKGDIYEVFSVVSEDVLPDLVMKLKNAGAKDIVVTSIEKLIS</sequence>
<gene>
    <name evidence="1" type="primary">hisG</name>
    <name type="ordered locus">Tneu_0151</name>
</gene>
<protein>
    <recommendedName>
        <fullName evidence="1">ATP phosphoribosyltransferase</fullName>
        <shortName evidence="1">ATP-PRT</shortName>
        <shortName evidence="1">ATP-PRTase</shortName>
        <ecNumber evidence="1">2.4.2.17</ecNumber>
    </recommendedName>
</protein>